<feature type="chain" id="PRO_1000096339" description="Phosphoglycerate kinase">
    <location>
        <begin position="1"/>
        <end position="392"/>
    </location>
</feature>
<feature type="binding site" evidence="1">
    <location>
        <begin position="19"/>
        <end position="21"/>
    </location>
    <ligand>
        <name>substrate</name>
    </ligand>
</feature>
<feature type="binding site" evidence="1">
    <location>
        <position position="35"/>
    </location>
    <ligand>
        <name>substrate</name>
    </ligand>
</feature>
<feature type="binding site" evidence="1">
    <location>
        <begin position="58"/>
        <end position="61"/>
    </location>
    <ligand>
        <name>substrate</name>
    </ligand>
</feature>
<feature type="binding site" evidence="1">
    <location>
        <position position="117"/>
    </location>
    <ligand>
        <name>substrate</name>
    </ligand>
</feature>
<feature type="binding site" evidence="1">
    <location>
        <position position="150"/>
    </location>
    <ligand>
        <name>substrate</name>
    </ligand>
</feature>
<feature type="binding site" evidence="1">
    <location>
        <position position="201"/>
    </location>
    <ligand>
        <name>ATP</name>
        <dbReference type="ChEBI" id="CHEBI:30616"/>
    </ligand>
</feature>
<feature type="binding site" evidence="1">
    <location>
        <position position="323"/>
    </location>
    <ligand>
        <name>ATP</name>
        <dbReference type="ChEBI" id="CHEBI:30616"/>
    </ligand>
</feature>
<feature type="binding site" evidence="1">
    <location>
        <begin position="349"/>
        <end position="352"/>
    </location>
    <ligand>
        <name>ATP</name>
        <dbReference type="ChEBI" id="CHEBI:30616"/>
    </ligand>
</feature>
<dbReference type="EC" id="2.7.2.3" evidence="1"/>
<dbReference type="EMBL" id="CR522870">
    <property type="protein sequence ID" value="CAG34830.1"/>
    <property type="molecule type" value="Genomic_DNA"/>
</dbReference>
<dbReference type="RefSeq" id="WP_011187346.1">
    <property type="nucleotide sequence ID" value="NC_006138.1"/>
</dbReference>
<dbReference type="SMR" id="Q6AS45"/>
<dbReference type="STRING" id="177439.DP0101"/>
<dbReference type="KEGG" id="dps:DP0101"/>
<dbReference type="eggNOG" id="COG0126">
    <property type="taxonomic scope" value="Bacteria"/>
</dbReference>
<dbReference type="HOGENOM" id="CLU_025427_0_2_7"/>
<dbReference type="OrthoDB" id="9808460at2"/>
<dbReference type="UniPathway" id="UPA00109">
    <property type="reaction ID" value="UER00185"/>
</dbReference>
<dbReference type="Proteomes" id="UP000000602">
    <property type="component" value="Chromosome"/>
</dbReference>
<dbReference type="GO" id="GO:0005829">
    <property type="term" value="C:cytosol"/>
    <property type="evidence" value="ECO:0007669"/>
    <property type="project" value="TreeGrafter"/>
</dbReference>
<dbReference type="GO" id="GO:0043531">
    <property type="term" value="F:ADP binding"/>
    <property type="evidence" value="ECO:0007669"/>
    <property type="project" value="TreeGrafter"/>
</dbReference>
<dbReference type="GO" id="GO:0005524">
    <property type="term" value="F:ATP binding"/>
    <property type="evidence" value="ECO:0007669"/>
    <property type="project" value="UniProtKB-KW"/>
</dbReference>
<dbReference type="GO" id="GO:0004618">
    <property type="term" value="F:phosphoglycerate kinase activity"/>
    <property type="evidence" value="ECO:0007669"/>
    <property type="project" value="UniProtKB-UniRule"/>
</dbReference>
<dbReference type="GO" id="GO:0006094">
    <property type="term" value="P:gluconeogenesis"/>
    <property type="evidence" value="ECO:0007669"/>
    <property type="project" value="TreeGrafter"/>
</dbReference>
<dbReference type="GO" id="GO:0006096">
    <property type="term" value="P:glycolytic process"/>
    <property type="evidence" value="ECO:0007669"/>
    <property type="project" value="UniProtKB-UniRule"/>
</dbReference>
<dbReference type="CDD" id="cd00318">
    <property type="entry name" value="Phosphoglycerate_kinase"/>
    <property type="match status" value="1"/>
</dbReference>
<dbReference type="FunFam" id="3.40.50.1260:FF:000003">
    <property type="entry name" value="Phosphoglycerate kinase"/>
    <property type="match status" value="1"/>
</dbReference>
<dbReference type="FunFam" id="3.40.50.1260:FF:000006">
    <property type="entry name" value="Phosphoglycerate kinase"/>
    <property type="match status" value="1"/>
</dbReference>
<dbReference type="Gene3D" id="3.40.50.1260">
    <property type="entry name" value="Phosphoglycerate kinase, N-terminal domain"/>
    <property type="match status" value="2"/>
</dbReference>
<dbReference type="HAMAP" id="MF_00145">
    <property type="entry name" value="Phosphoglyc_kinase"/>
    <property type="match status" value="1"/>
</dbReference>
<dbReference type="InterPro" id="IPR001576">
    <property type="entry name" value="Phosphoglycerate_kinase"/>
</dbReference>
<dbReference type="InterPro" id="IPR015911">
    <property type="entry name" value="Phosphoglycerate_kinase_CS"/>
</dbReference>
<dbReference type="InterPro" id="IPR015824">
    <property type="entry name" value="Phosphoglycerate_kinase_N"/>
</dbReference>
<dbReference type="InterPro" id="IPR036043">
    <property type="entry name" value="Phosphoglycerate_kinase_sf"/>
</dbReference>
<dbReference type="PANTHER" id="PTHR11406">
    <property type="entry name" value="PHOSPHOGLYCERATE KINASE"/>
    <property type="match status" value="1"/>
</dbReference>
<dbReference type="PANTHER" id="PTHR11406:SF23">
    <property type="entry name" value="PHOSPHOGLYCERATE KINASE 1, CHLOROPLASTIC-RELATED"/>
    <property type="match status" value="1"/>
</dbReference>
<dbReference type="Pfam" id="PF00162">
    <property type="entry name" value="PGK"/>
    <property type="match status" value="1"/>
</dbReference>
<dbReference type="PIRSF" id="PIRSF000724">
    <property type="entry name" value="Pgk"/>
    <property type="match status" value="1"/>
</dbReference>
<dbReference type="PRINTS" id="PR00477">
    <property type="entry name" value="PHGLYCKINASE"/>
</dbReference>
<dbReference type="SUPFAM" id="SSF53748">
    <property type="entry name" value="Phosphoglycerate kinase"/>
    <property type="match status" value="1"/>
</dbReference>
<dbReference type="PROSITE" id="PS00111">
    <property type="entry name" value="PGLYCERATE_KINASE"/>
    <property type="match status" value="1"/>
</dbReference>
<reference key="1">
    <citation type="journal article" date="2004" name="Environ. Microbiol.">
        <title>The genome of Desulfotalea psychrophila, a sulfate-reducing bacterium from permanently cold Arctic sediments.</title>
        <authorList>
            <person name="Rabus R."/>
            <person name="Ruepp A."/>
            <person name="Frickey T."/>
            <person name="Rattei T."/>
            <person name="Fartmann B."/>
            <person name="Stark M."/>
            <person name="Bauer M."/>
            <person name="Zibat A."/>
            <person name="Lombardot T."/>
            <person name="Becker I."/>
            <person name="Amann J."/>
            <person name="Gellner K."/>
            <person name="Teeling H."/>
            <person name="Leuschner W.D."/>
            <person name="Gloeckner F.-O."/>
            <person name="Lupas A.N."/>
            <person name="Amann R."/>
            <person name="Klenk H.-P."/>
        </authorList>
    </citation>
    <scope>NUCLEOTIDE SEQUENCE [LARGE SCALE GENOMIC DNA]</scope>
    <source>
        <strain>DSM 12343 / LSv54</strain>
    </source>
</reference>
<protein>
    <recommendedName>
        <fullName evidence="1">Phosphoglycerate kinase</fullName>
        <ecNumber evidence="1">2.7.2.3</ecNumber>
    </recommendedName>
</protein>
<proteinExistence type="inferred from homology"/>
<evidence type="ECO:0000255" key="1">
    <source>
        <dbReference type="HAMAP-Rule" id="MF_00145"/>
    </source>
</evidence>
<keyword id="KW-0067">ATP-binding</keyword>
<keyword id="KW-0963">Cytoplasm</keyword>
<keyword id="KW-0324">Glycolysis</keyword>
<keyword id="KW-0418">Kinase</keyword>
<keyword id="KW-0547">Nucleotide-binding</keyword>
<keyword id="KW-1185">Reference proteome</keyword>
<keyword id="KW-0808">Transferase</keyword>
<organism>
    <name type="scientific">Desulfotalea psychrophila (strain LSv54 / DSM 12343)</name>
    <dbReference type="NCBI Taxonomy" id="177439"/>
    <lineage>
        <taxon>Bacteria</taxon>
        <taxon>Pseudomonadati</taxon>
        <taxon>Thermodesulfobacteriota</taxon>
        <taxon>Desulfobulbia</taxon>
        <taxon>Desulfobulbales</taxon>
        <taxon>Desulfocapsaceae</taxon>
        <taxon>Desulfotalea</taxon>
    </lineage>
</organism>
<accession>Q6AS45</accession>
<sequence>MKSLRELELAGKRVLVRVDFNVPMDDKQRITDDIRIRMVLPTLRYVLEQGGRLIICSHMGRPKGKRVEEYSLAPIARHLAGLLGRDVGIAPDCIGAEVEAQVAALGVGEVLLLQNLRFYGEETENDAVFAGKLAGLADVYVNDAFAVSHRAHASVVGVAERVAEKCAGFLLQTEIDYFHKSMNDPIRPLVALVGGAKVSSKIGALENMLGKVDKMIIGGAMANTFLMSQGVDVGASKVEDDLLVTARNFLQAAGERGMKVYLPVDFVVADRFAADAVHKTVPADSVPEGWMALDVGPASSILFREALQGAGTIVWNGPMGAFEMDAFAGGTMSLCRDVAASQALSITGGGDSNAAVKKSGEADNISYMSTGGGAFLQLMEGKTLPGVDALEA</sequence>
<gene>
    <name evidence="1" type="primary">pgk</name>
    <name type="ordered locus">DP0101</name>
</gene>
<comment type="catalytic activity">
    <reaction evidence="1">
        <text>(2R)-3-phosphoglycerate + ATP = (2R)-3-phospho-glyceroyl phosphate + ADP</text>
        <dbReference type="Rhea" id="RHEA:14801"/>
        <dbReference type="ChEBI" id="CHEBI:30616"/>
        <dbReference type="ChEBI" id="CHEBI:57604"/>
        <dbReference type="ChEBI" id="CHEBI:58272"/>
        <dbReference type="ChEBI" id="CHEBI:456216"/>
        <dbReference type="EC" id="2.7.2.3"/>
    </reaction>
</comment>
<comment type="pathway">
    <text evidence="1">Carbohydrate degradation; glycolysis; pyruvate from D-glyceraldehyde 3-phosphate: step 2/5.</text>
</comment>
<comment type="subunit">
    <text evidence="1">Monomer.</text>
</comment>
<comment type="subcellular location">
    <subcellularLocation>
        <location evidence="1">Cytoplasm</location>
    </subcellularLocation>
</comment>
<comment type="similarity">
    <text evidence="1">Belongs to the phosphoglycerate kinase family.</text>
</comment>
<name>PGK_DESPS</name>